<dbReference type="EC" id="2.7.7.-"/>
<dbReference type="EC" id="3.1.21.-"/>
<dbReference type="EMBL" id="M81103">
    <property type="protein sequence ID" value="AAA47949.1"/>
    <property type="status" value="ALT_SEQ"/>
    <property type="molecule type" value="Genomic_DNA"/>
</dbReference>
<dbReference type="EMBL" id="M81103">
    <property type="protein sequence ID" value="AAA47950.1"/>
    <property type="status" value="ALT_SEQ"/>
    <property type="molecule type" value="Genomic_DNA"/>
</dbReference>
<dbReference type="PIR" id="C42452">
    <property type="entry name" value="C42452"/>
</dbReference>
<dbReference type="SMR" id="P31618"/>
<dbReference type="KEGG" id="vg:944385"/>
<dbReference type="KEGG" id="vg:944386"/>
<dbReference type="Proteomes" id="UP000007548">
    <property type="component" value="Segment"/>
</dbReference>
<dbReference type="GO" id="GO:0042025">
    <property type="term" value="C:host cell nucleus"/>
    <property type="evidence" value="ECO:0007669"/>
    <property type="project" value="UniProtKB-SubCell"/>
</dbReference>
<dbReference type="GO" id="GO:0005524">
    <property type="term" value="F:ATP binding"/>
    <property type="evidence" value="ECO:0007669"/>
    <property type="project" value="UniProtKB-KW"/>
</dbReference>
<dbReference type="GO" id="GO:0003677">
    <property type="term" value="F:DNA binding"/>
    <property type="evidence" value="ECO:0007669"/>
    <property type="project" value="UniProtKB-KW"/>
</dbReference>
<dbReference type="GO" id="GO:0016888">
    <property type="term" value="F:endodeoxyribonuclease activity, producing 5'-phosphomonoesters"/>
    <property type="evidence" value="ECO:0007669"/>
    <property type="project" value="InterPro"/>
</dbReference>
<dbReference type="GO" id="GO:0004386">
    <property type="term" value="F:helicase activity"/>
    <property type="evidence" value="ECO:0007669"/>
    <property type="project" value="UniProtKB-KW"/>
</dbReference>
<dbReference type="GO" id="GO:0046872">
    <property type="term" value="F:metal ion binding"/>
    <property type="evidence" value="ECO:0007669"/>
    <property type="project" value="UniProtKB-KW"/>
</dbReference>
<dbReference type="GO" id="GO:0016779">
    <property type="term" value="F:nucleotidyltransferase activity"/>
    <property type="evidence" value="ECO:0007669"/>
    <property type="project" value="UniProtKB-KW"/>
</dbReference>
<dbReference type="GO" id="GO:0005198">
    <property type="term" value="F:structural molecule activity"/>
    <property type="evidence" value="ECO:0007669"/>
    <property type="project" value="InterPro"/>
</dbReference>
<dbReference type="GO" id="GO:0006260">
    <property type="term" value="P:DNA replication"/>
    <property type="evidence" value="ECO:0007669"/>
    <property type="project" value="UniProtKB-KW"/>
</dbReference>
<dbReference type="Gene3D" id="3.40.1310.20">
    <property type="match status" value="1"/>
</dbReference>
<dbReference type="InterPro" id="IPR049912">
    <property type="entry name" value="CRESS_DNA_REP"/>
</dbReference>
<dbReference type="InterPro" id="IPR001301">
    <property type="entry name" value="Gemini_AL1_CLV"/>
</dbReference>
<dbReference type="InterPro" id="IPR001191">
    <property type="entry name" value="Gemini_AL1_REP"/>
</dbReference>
<dbReference type="InterPro" id="IPR022692">
    <property type="entry name" value="Gemini_AL1_REP_central"/>
</dbReference>
<dbReference type="InterPro" id="IPR027417">
    <property type="entry name" value="P-loop_NTPase"/>
</dbReference>
<dbReference type="Pfam" id="PF00799">
    <property type="entry name" value="Gemini_AL1"/>
    <property type="match status" value="1"/>
</dbReference>
<dbReference type="Pfam" id="PF08283">
    <property type="entry name" value="Gemini_AL1_M"/>
    <property type="match status" value="1"/>
</dbReference>
<dbReference type="PRINTS" id="PR00227">
    <property type="entry name" value="GEMCOATAL1"/>
</dbReference>
<dbReference type="PRINTS" id="PR00228">
    <property type="entry name" value="GEMCOATCLVL1"/>
</dbReference>
<dbReference type="SUPFAM" id="SSF55464">
    <property type="entry name" value="Origin of replication-binding domain, RBD-like"/>
    <property type="match status" value="1"/>
</dbReference>
<dbReference type="SUPFAM" id="SSF52540">
    <property type="entry name" value="P-loop containing nucleoside triphosphate hydrolases"/>
    <property type="match status" value="1"/>
</dbReference>
<dbReference type="PROSITE" id="PS52020">
    <property type="entry name" value="CRESS_DNA_REP"/>
    <property type="match status" value="1"/>
</dbReference>
<sequence length="337" mass="39390">MPSAPQKTKSFRLQTKYVFLTYPRCSSSAENLRDFLWDKLSRFAIFFIAIATELHQDGTPHLHCLIQLDKRSNIRDPSFFDLEGNHPNIQPAKNSEQVLEYISKDGNVITKGEFKKHRVSPSKSDERWRTIIQTATSKEEYLDMIKDEFPHEWATKLQWLEYSANKLFPPQPEIYQATFTEEDLQCHEDLQLWRDQHLYHEPRRAGTRIPSLYICGPSRTGKTTWARSLGRHNYWNGTIDFTVYDDHATYNVIDDIPFKFVPLWKQLIGCQSDFTVNPKYGKKKKIKGGVPCIILCNDDEDWLKNMSPAQIEYFEANCITHFMYAAETFFAPESSSH</sequence>
<keyword id="KW-0025">Alternative splicing</keyword>
<keyword id="KW-0067">ATP-binding</keyword>
<keyword id="KW-0190">Covalent protein-DNA linkage</keyword>
<keyword id="KW-0235">DNA replication</keyword>
<keyword id="KW-0238">DNA-binding</keyword>
<keyword id="KW-0255">Endonuclease</keyword>
<keyword id="KW-0347">Helicase</keyword>
<keyword id="KW-1048">Host nucleus</keyword>
<keyword id="KW-0378">Hydrolase</keyword>
<keyword id="KW-0479">Metal-binding</keyword>
<keyword id="KW-0511">Multifunctional enzyme</keyword>
<keyword id="KW-0540">Nuclease</keyword>
<keyword id="KW-0547">Nucleotide-binding</keyword>
<keyword id="KW-0548">Nucleotidyltransferase</keyword>
<keyword id="KW-0678">Repressor</keyword>
<keyword id="KW-0808">Transferase</keyword>
<organism>
    <name type="scientific">Tobacco yellow dwarf virus (strain Australia)</name>
    <name type="common">TYDV</name>
    <dbReference type="NCBI Taxonomy" id="31599"/>
    <lineage>
        <taxon>Viruses</taxon>
        <taxon>Monodnaviria</taxon>
        <taxon>Shotokuvirae</taxon>
        <taxon>Cressdnaviricota</taxon>
        <taxon>Repensiviricetes</taxon>
        <taxon>Geplafuvirales</taxon>
        <taxon>Geminiviridae</taxon>
        <taxon>Mastrevirus</taxon>
        <taxon>Tobacco yellow dwarf virus</taxon>
    </lineage>
</organism>
<accession>P31618</accession>
<gene>
    <name type="ORF">C1/C2</name>
</gene>
<comment type="function">
    <text evidence="1">Essential for the replication of viral ssDNA. The closed circular ssDNA genome is first converted to a superhelical dsDNA. Rep binds a specific region at the genome origin of replication. It introduces an endonucleolytic nick within the conserved sequence 5'-TAATATTAC-3' in the intergenic region of the genome present in all geminiviruses, thereby initiating the rolling circle replication (RCR). Following cleavage, binds covalently to the 5'-phosphate of DNA as a tyrosyl ester. The cleavage gives rise to a free 3'-OH that serves as a primer for the cellular DNA polymerase. The polymerase synthesizes the (+) strand DNA by rolling circle mechanism. After one round of replication, a Rep-catalyzed nucleotidyl transfer reaction releases a circular single-stranded virus genome, thereby terminating the replication. Displays origin-specific DNA cleavage, nucleotidyl transferase, ATPase and helicase activities. Acts as an inhibitor of C-sense gene transcription (By similarity).</text>
</comment>
<comment type="cofactor">
    <cofactor evidence="3">
        <name>Mg(2+)</name>
        <dbReference type="ChEBI" id="CHEBI:18420"/>
    </cofactor>
    <cofactor evidence="3">
        <name>Mn(2+)</name>
        <dbReference type="ChEBI" id="CHEBI:29035"/>
    </cofactor>
    <text evidence="3">Divalent metal cations, possibly Mg(2+) or Mn(2+).</text>
</comment>
<comment type="subunit">
    <text>Homooligomer. Rep binds to repeated DNA motifs (iterons). Forms the O-complex, which is a Rep-DNA complex involved in the initiation of RCR. Part of the C- and V-complexes which are RepA-Rep-DNA complexes involved in the c-sense and v-sense transcription.</text>
</comment>
<comment type="subcellular location">
    <subcellularLocation>
        <location evidence="1">Host nucleus</location>
    </subcellularLocation>
</comment>
<comment type="alternative products">
    <event type="alternative splicing"/>
    <isoform>
        <id>P31618-1</id>
        <name>Rep</name>
        <sequence type="displayed"/>
    </isoform>
    <isoform>
        <id>P31617-1</id>
        <name>RepA</name>
        <sequence type="external"/>
    </isoform>
</comment>
<comment type="domain">
    <text>There are 3 rolling circle replication (RCR) motifs. RCR-2 is probably involved in metal coordination. RCR-3 is required for phosphodiester bond cleavage for initiation of RCR.</text>
</comment>
<comment type="similarity">
    <text evidence="4">Belongs to the geminiviridae Rep protein family.</text>
</comment>
<comment type="sequence caution" evidence="4">
    <conflict type="erroneous gene model prediction">
        <sequence resource="EMBL-CDS" id="AAA47949"/>
    </conflict>
</comment>
<comment type="sequence caution" evidence="4">
    <conflict type="erroneous gene model prediction">
        <sequence resource="EMBL-CDS" id="AAA47950"/>
    </conflict>
</comment>
<feature type="chain" id="PRO_0000222301" description="Replication-associated protein">
    <location>
        <begin position="1"/>
        <end position="337"/>
    </location>
</feature>
<feature type="domain" description="CRESS-DNA virus Rep endonuclease" evidence="3">
    <location>
        <begin position="12"/>
        <end position="114"/>
    </location>
</feature>
<feature type="region of interest" description="Oligomerization" evidence="1">
    <location>
        <begin position="163"/>
        <end position="175"/>
    </location>
</feature>
<feature type="region of interest" description="Transactivation" evidence="1">
    <location>
        <begin position="239"/>
        <end position="257"/>
    </location>
</feature>
<feature type="short sequence motif" description="RCR-1" evidence="3">
    <location>
        <begin position="19"/>
        <end position="22"/>
    </location>
</feature>
<feature type="short sequence motif" description="RCR-2" evidence="3">
    <location>
        <begin position="61"/>
        <end position="63"/>
    </location>
</feature>
<feature type="short sequence motif" description="RCR-3" evidence="3">
    <location>
        <begin position="101"/>
        <end position="104"/>
    </location>
</feature>
<feature type="short sequence motif" description="Nuclear localization signal" evidence="2">
    <location>
        <begin position="279"/>
        <end position="289"/>
    </location>
</feature>
<feature type="active site" description="For DNA cleavage activity" evidence="3">
    <location>
        <position position="101"/>
    </location>
</feature>
<feature type="binding site" evidence="3">
    <location>
        <position position="53"/>
    </location>
    <ligand>
        <name>a divalent metal cation</name>
        <dbReference type="ChEBI" id="CHEBI:60240"/>
    </ligand>
</feature>
<feature type="binding site" evidence="3">
    <location>
        <position position="61"/>
    </location>
    <ligand>
        <name>a divalent metal cation</name>
        <dbReference type="ChEBI" id="CHEBI:60240"/>
    </ligand>
</feature>
<feature type="binding site" evidence="3">
    <location>
        <position position="63"/>
    </location>
    <ligand>
        <name>a divalent metal cation</name>
        <dbReference type="ChEBI" id="CHEBI:60240"/>
    </ligand>
</feature>
<feature type="binding site" evidence="3">
    <location>
        <position position="105"/>
    </location>
    <ligand>
        <name>a divalent metal cation</name>
        <dbReference type="ChEBI" id="CHEBI:60240"/>
    </ligand>
</feature>
<feature type="binding site" evidence="2">
    <location>
        <begin position="216"/>
        <end position="223"/>
    </location>
    <ligand>
        <name>ATP</name>
        <dbReference type="ChEBI" id="CHEBI:30616"/>
    </ligand>
</feature>
<proteinExistence type="inferred from homology"/>
<name>REP_TYDVA</name>
<protein>
    <recommendedName>
        <fullName>Replication-associated protein</fullName>
        <shortName>Rep</shortName>
        <ecNumber>2.7.7.-</ecNumber>
        <ecNumber>3.1.21.-</ecNumber>
    </recommendedName>
</protein>
<organismHost>
    <name type="scientific">Datura stramonium</name>
    <name type="common">Jimsonweed</name>
    <name type="synonym">Common thornapple</name>
    <dbReference type="NCBI Taxonomy" id="4076"/>
</organismHost>
<organismHost>
    <name type="scientific">Datura stramonium var. tatula</name>
    <dbReference type="NCBI Taxonomy" id="239686"/>
</organismHost>
<organismHost>
    <name type="scientific">Nicotiana tabacum</name>
    <name type="common">Common tobacco</name>
    <dbReference type="NCBI Taxonomy" id="4097"/>
</organismHost>
<organismHost>
    <name type="scientific">Solanum lycopersicum</name>
    <name type="common">Tomato</name>
    <name type="synonym">Lycopersicon esculentum</name>
    <dbReference type="NCBI Taxonomy" id="4081"/>
</organismHost>
<reference key="1">
    <citation type="journal article" date="1992" name="Virology">
        <title>The nucleotide sequence of the infectious cloned DNA component of tobacco yellow dwarf virus reveals features of geminiviruses infecting monocotyledonous plants.</title>
        <authorList>
            <person name="Morris B.A.M."/>
            <person name="Richardson K.A."/>
            <person name="Haley A."/>
            <person name="Zhan X."/>
            <person name="Thomas J.E."/>
        </authorList>
    </citation>
    <scope>NUCLEOTIDE SEQUENCE [GENOMIC DNA]</scope>
</reference>
<evidence type="ECO:0000250" key="1"/>
<evidence type="ECO:0000255" key="2"/>
<evidence type="ECO:0000255" key="3">
    <source>
        <dbReference type="PROSITE-ProRule" id="PRU01364"/>
    </source>
</evidence>
<evidence type="ECO:0000305" key="4"/>